<feature type="chain" id="PRO_0000245283" description="Uncharacterized protein YOR293C-A">
    <location>
        <begin position="1"/>
        <end position="49"/>
    </location>
</feature>
<sequence length="49" mass="6124">MKLLFLNIIVVRRHLHCKSYRLSPWYIYIYGDYLLYTTEIPYKPFTRQP</sequence>
<proteinExistence type="evidence at protein level"/>
<dbReference type="EMBL" id="Z75201">
    <property type="status" value="NOT_ANNOTATED_CDS"/>
    <property type="molecule type" value="Genomic_DNA"/>
</dbReference>
<dbReference type="EMBL" id="Z75202">
    <property type="status" value="NOT_ANNOTATED_CDS"/>
    <property type="molecule type" value="Genomic_DNA"/>
</dbReference>
<dbReference type="EMBL" id="BK006948">
    <property type="protein sequence ID" value="DAA11058.1"/>
    <property type="molecule type" value="Genomic_DNA"/>
</dbReference>
<dbReference type="RefSeq" id="NP_878174.3">
    <property type="nucleotide sequence ID" value="NM_001184669.3"/>
</dbReference>
<dbReference type="SMR" id="Q3E7Y7"/>
<dbReference type="BioGRID" id="37028">
    <property type="interactions" value="15"/>
</dbReference>
<dbReference type="FunCoup" id="Q3E7Y7">
    <property type="interactions" value="4"/>
</dbReference>
<dbReference type="STRING" id="4932.YOR293C-A"/>
<dbReference type="PaxDb" id="4932-YOR293C-A"/>
<dbReference type="EnsemblFungi" id="YOR293C-A_mRNA">
    <property type="protein sequence ID" value="YOR293C-A"/>
    <property type="gene ID" value="YOR293C-A"/>
</dbReference>
<dbReference type="GeneID" id="1466486"/>
<dbReference type="KEGG" id="sce:YOR293C-A"/>
<dbReference type="AGR" id="SGD:S000028858"/>
<dbReference type="SGD" id="S000028858">
    <property type="gene designation" value="YOR293C-A"/>
</dbReference>
<dbReference type="VEuPathDB" id="FungiDB:YOR293C-A"/>
<dbReference type="HOGENOM" id="CLU_3144068_0_0_1"/>
<dbReference type="InParanoid" id="Q3E7Y7"/>
<dbReference type="BioCyc" id="YEAST:G3O-33916-MONOMER"/>
<dbReference type="BioGRID-ORCS" id="1466486">
    <property type="hits" value="0 hits in 10 CRISPR screens"/>
</dbReference>
<dbReference type="PRO" id="PR:Q3E7Y7"/>
<dbReference type="Proteomes" id="UP000002311">
    <property type="component" value="Chromosome XV"/>
</dbReference>
<organism>
    <name type="scientific">Saccharomyces cerevisiae (strain ATCC 204508 / S288c)</name>
    <name type="common">Baker's yeast</name>
    <dbReference type="NCBI Taxonomy" id="559292"/>
    <lineage>
        <taxon>Eukaryota</taxon>
        <taxon>Fungi</taxon>
        <taxon>Dikarya</taxon>
        <taxon>Ascomycota</taxon>
        <taxon>Saccharomycotina</taxon>
        <taxon>Saccharomycetes</taxon>
        <taxon>Saccharomycetales</taxon>
        <taxon>Saccharomycetaceae</taxon>
        <taxon>Saccharomyces</taxon>
    </lineage>
</organism>
<reference key="1">
    <citation type="journal article" date="1997" name="Nature">
        <title>The nucleotide sequence of Saccharomyces cerevisiae chromosome XV.</title>
        <authorList>
            <person name="Dujon B."/>
            <person name="Albermann K."/>
            <person name="Aldea M."/>
            <person name="Alexandraki D."/>
            <person name="Ansorge W."/>
            <person name="Arino J."/>
            <person name="Benes V."/>
            <person name="Bohn C."/>
            <person name="Bolotin-Fukuhara M."/>
            <person name="Bordonne R."/>
            <person name="Boyer J."/>
            <person name="Camasses A."/>
            <person name="Casamayor A."/>
            <person name="Casas C."/>
            <person name="Cheret G."/>
            <person name="Cziepluch C."/>
            <person name="Daignan-Fornier B."/>
            <person name="Dang V.-D."/>
            <person name="de Haan M."/>
            <person name="Delius H."/>
            <person name="Durand P."/>
            <person name="Fairhead C."/>
            <person name="Feldmann H."/>
            <person name="Gaillon L."/>
            <person name="Galisson F."/>
            <person name="Gamo F.-J."/>
            <person name="Gancedo C."/>
            <person name="Goffeau A."/>
            <person name="Goulding S.E."/>
            <person name="Grivell L.A."/>
            <person name="Habbig B."/>
            <person name="Hand N.J."/>
            <person name="Hani J."/>
            <person name="Hattenhorst U."/>
            <person name="Hebling U."/>
            <person name="Hernando Y."/>
            <person name="Herrero E."/>
            <person name="Heumann K."/>
            <person name="Hiesel R."/>
            <person name="Hilger F."/>
            <person name="Hofmann B."/>
            <person name="Hollenberg C.P."/>
            <person name="Hughes B."/>
            <person name="Jauniaux J.-C."/>
            <person name="Kalogeropoulos A."/>
            <person name="Katsoulou C."/>
            <person name="Kordes E."/>
            <person name="Lafuente M.J."/>
            <person name="Landt O."/>
            <person name="Louis E.J."/>
            <person name="Maarse A.C."/>
            <person name="Madania A."/>
            <person name="Mannhaupt G."/>
            <person name="Marck C."/>
            <person name="Martin R.P."/>
            <person name="Mewes H.-W."/>
            <person name="Michaux G."/>
            <person name="Paces V."/>
            <person name="Parle-McDermott A.G."/>
            <person name="Pearson B.M."/>
            <person name="Perrin A."/>
            <person name="Pettersson B."/>
            <person name="Poch O."/>
            <person name="Pohl T.M."/>
            <person name="Poirey R."/>
            <person name="Portetelle D."/>
            <person name="Pujol A."/>
            <person name="Purnelle B."/>
            <person name="Ramezani Rad M."/>
            <person name="Rechmann S."/>
            <person name="Schwager C."/>
            <person name="Schweizer M."/>
            <person name="Sor F."/>
            <person name="Sterky F."/>
            <person name="Tarassov I.A."/>
            <person name="Teodoru C."/>
            <person name="Tettelin H."/>
            <person name="Thierry A."/>
            <person name="Tobiasch E."/>
            <person name="Tzermia M."/>
            <person name="Uhlen M."/>
            <person name="Unseld M."/>
            <person name="Valens M."/>
            <person name="Vandenbol M."/>
            <person name="Vetter I."/>
            <person name="Vlcek C."/>
            <person name="Voet M."/>
            <person name="Volckaert G."/>
            <person name="Voss H."/>
            <person name="Wambutt R."/>
            <person name="Wedler H."/>
            <person name="Wiemann S."/>
            <person name="Winsor B."/>
            <person name="Wolfe K.H."/>
            <person name="Zollner A."/>
            <person name="Zumstein E."/>
            <person name="Kleine K."/>
        </authorList>
    </citation>
    <scope>NUCLEOTIDE SEQUENCE [LARGE SCALE GENOMIC DNA]</scope>
    <source>
        <strain>ATCC 204508 / S288c</strain>
    </source>
</reference>
<reference key="2">
    <citation type="journal article" date="2014" name="G3 (Bethesda)">
        <title>The reference genome sequence of Saccharomyces cerevisiae: Then and now.</title>
        <authorList>
            <person name="Engel S.R."/>
            <person name="Dietrich F.S."/>
            <person name="Fisk D.G."/>
            <person name="Binkley G."/>
            <person name="Balakrishnan R."/>
            <person name="Costanzo M.C."/>
            <person name="Dwight S.S."/>
            <person name="Hitz B.C."/>
            <person name="Karra K."/>
            <person name="Nash R.S."/>
            <person name="Weng S."/>
            <person name="Wong E.D."/>
            <person name="Lloyd P."/>
            <person name="Skrzypek M.S."/>
            <person name="Miyasato S.R."/>
            <person name="Simison M."/>
            <person name="Cherry J.M."/>
        </authorList>
    </citation>
    <scope>GENOME REANNOTATION</scope>
    <source>
        <strain>ATCC 204508 / S288c</strain>
    </source>
</reference>
<reference key="3">
    <citation type="journal article" date="2002" name="Genome Res.">
        <title>Parallel identification of new genes in Saccharomyces cerevisiae.</title>
        <authorList>
            <person name="Oshiro G."/>
            <person name="Wodicka L.M."/>
            <person name="Washburn M.P."/>
            <person name="Yates J.R. III"/>
            <person name="Lockhart D.J."/>
            <person name="Winzeler E.A."/>
        </authorList>
    </citation>
    <scope>IDENTIFICATION BY MASS SPECTROMETRY</scope>
</reference>
<accession>Q3E7Y7</accession>
<accession>D6W2Z2</accession>
<name>YO293_YEAST</name>
<keyword id="KW-1185">Reference proteome</keyword>
<gene>
    <name type="ordered locus">YOR293C-A</name>
</gene>
<protein>
    <recommendedName>
        <fullName>Uncharacterized protein YOR293C-A</fullName>
    </recommendedName>
</protein>